<evidence type="ECO:0000250" key="1"/>
<evidence type="ECO:0000305" key="2"/>
<dbReference type="EC" id="3.2.-.-"/>
<dbReference type="EMBL" id="AF027868">
    <property type="protein sequence ID" value="AAB84456.1"/>
    <property type="molecule type" value="Genomic_DNA"/>
</dbReference>
<dbReference type="EMBL" id="AL009126">
    <property type="protein sequence ID" value="CAB13771.1"/>
    <property type="molecule type" value="Genomic_DNA"/>
</dbReference>
<dbReference type="PIR" id="A69898">
    <property type="entry name" value="A69898"/>
</dbReference>
<dbReference type="RefSeq" id="NP_389760.1">
    <property type="nucleotide sequence ID" value="NC_000964.3"/>
</dbReference>
<dbReference type="RefSeq" id="WP_003231388.1">
    <property type="nucleotide sequence ID" value="NZ_OZ025638.1"/>
</dbReference>
<dbReference type="SMR" id="O34947"/>
<dbReference type="FunCoup" id="O34947">
    <property type="interactions" value="24"/>
</dbReference>
<dbReference type="STRING" id="224308.BSU18790"/>
<dbReference type="PaxDb" id="224308-BSU18790"/>
<dbReference type="EnsemblBacteria" id="CAB13771">
    <property type="protein sequence ID" value="CAB13771"/>
    <property type="gene ID" value="BSU_18790"/>
</dbReference>
<dbReference type="GeneID" id="940031"/>
<dbReference type="KEGG" id="bsu:BSU18790"/>
<dbReference type="PATRIC" id="fig|224308.179.peg.2048"/>
<dbReference type="eggNOG" id="COG0693">
    <property type="taxonomic scope" value="Bacteria"/>
</dbReference>
<dbReference type="InParanoid" id="O34947"/>
<dbReference type="OrthoDB" id="6003696at2"/>
<dbReference type="PhylomeDB" id="O34947"/>
<dbReference type="BioCyc" id="BSUB:BSU18790-MONOMER"/>
<dbReference type="Proteomes" id="UP000001570">
    <property type="component" value="Chromosome"/>
</dbReference>
<dbReference type="GO" id="GO:0005737">
    <property type="term" value="C:cytoplasm"/>
    <property type="evidence" value="ECO:0000318"/>
    <property type="project" value="GO_Central"/>
</dbReference>
<dbReference type="GO" id="GO:0008233">
    <property type="term" value="F:peptidase activity"/>
    <property type="evidence" value="ECO:0007669"/>
    <property type="project" value="UniProtKB-KW"/>
</dbReference>
<dbReference type="GO" id="GO:0006508">
    <property type="term" value="P:proteolysis"/>
    <property type="evidence" value="ECO:0007669"/>
    <property type="project" value="UniProtKB-KW"/>
</dbReference>
<dbReference type="CDD" id="cd03140">
    <property type="entry name" value="GATase1_PfpI_3"/>
    <property type="match status" value="1"/>
</dbReference>
<dbReference type="Gene3D" id="3.40.50.880">
    <property type="match status" value="1"/>
</dbReference>
<dbReference type="InterPro" id="IPR029062">
    <property type="entry name" value="Class_I_gatase-like"/>
</dbReference>
<dbReference type="InterPro" id="IPR002818">
    <property type="entry name" value="DJ-1/PfpI"/>
</dbReference>
<dbReference type="InterPro" id="IPR050325">
    <property type="entry name" value="Prot/Nucl_acid_deglycase"/>
</dbReference>
<dbReference type="PANTHER" id="PTHR48094:SF19">
    <property type="entry name" value="DJ-1_PFPI DOMAIN-CONTAINING PROTEIN"/>
    <property type="match status" value="1"/>
</dbReference>
<dbReference type="PANTHER" id="PTHR48094">
    <property type="entry name" value="PROTEIN/NUCLEIC ACID DEGLYCASE DJ-1-RELATED"/>
    <property type="match status" value="1"/>
</dbReference>
<dbReference type="Pfam" id="PF01965">
    <property type="entry name" value="DJ-1_PfpI"/>
    <property type="match status" value="1"/>
</dbReference>
<dbReference type="SUPFAM" id="SSF52317">
    <property type="entry name" value="Class I glutamine amidotransferase-like"/>
    <property type="match status" value="1"/>
</dbReference>
<gene>
    <name type="primary">yoaZ</name>
    <name type="ordered locus">BSU18790</name>
</gene>
<organism>
    <name type="scientific">Bacillus subtilis (strain 168)</name>
    <dbReference type="NCBI Taxonomy" id="224308"/>
    <lineage>
        <taxon>Bacteria</taxon>
        <taxon>Bacillati</taxon>
        <taxon>Bacillota</taxon>
        <taxon>Bacilli</taxon>
        <taxon>Bacillales</taxon>
        <taxon>Bacillaceae</taxon>
        <taxon>Bacillus</taxon>
    </lineage>
</organism>
<comment type="similarity">
    <text evidence="2">Belongs to the peptidase C56 family.</text>
</comment>
<sequence>MQTRKVYLYVFHTMSDWEYGYLIAELNSGRYFKQDAASLKVVTVGVNKEMITTLGGLSIKPDISLDECTLGSQDLIILPGGNTWGEDIHQPILKKVGDALKLGTTIAAICGATLGLANEGYLNSRKHTSNDLDYMNMVCPNYKGETFYEKGPAVSDENLVTASGIAPLEFAVEVLKKLDVFAPDTLRSWYKLNKTQKPEYFFELMNTINR</sequence>
<protein>
    <recommendedName>
        <fullName>Uncharacterized protease YoaZ</fullName>
        <ecNumber>3.2.-.-</ecNumber>
    </recommendedName>
</protein>
<reference key="1">
    <citation type="submission" date="1997-10" db="EMBL/GenBank/DDBJ databases">
        <title>Sequence analysis of the Bacillus subtilis chromosome region between the terC and odhAB loci cloned in a yeast artificial chromosome.</title>
        <authorList>
            <person name="Lapidus A."/>
            <person name="Galleron N."/>
            <person name="Sorokin A."/>
            <person name="Ehrlich D."/>
        </authorList>
    </citation>
    <scope>NUCLEOTIDE SEQUENCE [GENOMIC DNA]</scope>
</reference>
<reference key="2">
    <citation type="journal article" date="1997" name="Nature">
        <title>The complete genome sequence of the Gram-positive bacterium Bacillus subtilis.</title>
        <authorList>
            <person name="Kunst F."/>
            <person name="Ogasawara N."/>
            <person name="Moszer I."/>
            <person name="Albertini A.M."/>
            <person name="Alloni G."/>
            <person name="Azevedo V."/>
            <person name="Bertero M.G."/>
            <person name="Bessieres P."/>
            <person name="Bolotin A."/>
            <person name="Borchert S."/>
            <person name="Borriss R."/>
            <person name="Boursier L."/>
            <person name="Brans A."/>
            <person name="Braun M."/>
            <person name="Brignell S.C."/>
            <person name="Bron S."/>
            <person name="Brouillet S."/>
            <person name="Bruschi C.V."/>
            <person name="Caldwell B."/>
            <person name="Capuano V."/>
            <person name="Carter N.M."/>
            <person name="Choi S.-K."/>
            <person name="Codani J.-J."/>
            <person name="Connerton I.F."/>
            <person name="Cummings N.J."/>
            <person name="Daniel R.A."/>
            <person name="Denizot F."/>
            <person name="Devine K.M."/>
            <person name="Duesterhoeft A."/>
            <person name="Ehrlich S.D."/>
            <person name="Emmerson P.T."/>
            <person name="Entian K.-D."/>
            <person name="Errington J."/>
            <person name="Fabret C."/>
            <person name="Ferrari E."/>
            <person name="Foulger D."/>
            <person name="Fritz C."/>
            <person name="Fujita M."/>
            <person name="Fujita Y."/>
            <person name="Fuma S."/>
            <person name="Galizzi A."/>
            <person name="Galleron N."/>
            <person name="Ghim S.-Y."/>
            <person name="Glaser P."/>
            <person name="Goffeau A."/>
            <person name="Golightly E.J."/>
            <person name="Grandi G."/>
            <person name="Guiseppi G."/>
            <person name="Guy B.J."/>
            <person name="Haga K."/>
            <person name="Haiech J."/>
            <person name="Harwood C.R."/>
            <person name="Henaut A."/>
            <person name="Hilbert H."/>
            <person name="Holsappel S."/>
            <person name="Hosono S."/>
            <person name="Hullo M.-F."/>
            <person name="Itaya M."/>
            <person name="Jones L.-M."/>
            <person name="Joris B."/>
            <person name="Karamata D."/>
            <person name="Kasahara Y."/>
            <person name="Klaerr-Blanchard M."/>
            <person name="Klein C."/>
            <person name="Kobayashi Y."/>
            <person name="Koetter P."/>
            <person name="Koningstein G."/>
            <person name="Krogh S."/>
            <person name="Kumano M."/>
            <person name="Kurita K."/>
            <person name="Lapidus A."/>
            <person name="Lardinois S."/>
            <person name="Lauber J."/>
            <person name="Lazarevic V."/>
            <person name="Lee S.-M."/>
            <person name="Levine A."/>
            <person name="Liu H."/>
            <person name="Masuda S."/>
            <person name="Mauel C."/>
            <person name="Medigue C."/>
            <person name="Medina N."/>
            <person name="Mellado R.P."/>
            <person name="Mizuno M."/>
            <person name="Moestl D."/>
            <person name="Nakai S."/>
            <person name="Noback M."/>
            <person name="Noone D."/>
            <person name="O'Reilly M."/>
            <person name="Ogawa K."/>
            <person name="Ogiwara A."/>
            <person name="Oudega B."/>
            <person name="Park S.-H."/>
            <person name="Parro V."/>
            <person name="Pohl T.M."/>
            <person name="Portetelle D."/>
            <person name="Porwollik S."/>
            <person name="Prescott A.M."/>
            <person name="Presecan E."/>
            <person name="Pujic P."/>
            <person name="Purnelle B."/>
            <person name="Rapoport G."/>
            <person name="Rey M."/>
            <person name="Reynolds S."/>
            <person name="Rieger M."/>
            <person name="Rivolta C."/>
            <person name="Rocha E."/>
            <person name="Roche B."/>
            <person name="Rose M."/>
            <person name="Sadaie Y."/>
            <person name="Sato T."/>
            <person name="Scanlan E."/>
            <person name="Schleich S."/>
            <person name="Schroeter R."/>
            <person name="Scoffone F."/>
            <person name="Sekiguchi J."/>
            <person name="Sekowska A."/>
            <person name="Seror S.J."/>
            <person name="Serror P."/>
            <person name="Shin B.-S."/>
            <person name="Soldo B."/>
            <person name="Sorokin A."/>
            <person name="Tacconi E."/>
            <person name="Takagi T."/>
            <person name="Takahashi H."/>
            <person name="Takemaru K."/>
            <person name="Takeuchi M."/>
            <person name="Tamakoshi A."/>
            <person name="Tanaka T."/>
            <person name="Terpstra P."/>
            <person name="Tognoni A."/>
            <person name="Tosato V."/>
            <person name="Uchiyama S."/>
            <person name="Vandenbol M."/>
            <person name="Vannier F."/>
            <person name="Vassarotti A."/>
            <person name="Viari A."/>
            <person name="Wambutt R."/>
            <person name="Wedler E."/>
            <person name="Wedler H."/>
            <person name="Weitzenegger T."/>
            <person name="Winters P."/>
            <person name="Wipat A."/>
            <person name="Yamamoto H."/>
            <person name="Yamane K."/>
            <person name="Yasumoto K."/>
            <person name="Yata K."/>
            <person name="Yoshida K."/>
            <person name="Yoshikawa H.-F."/>
            <person name="Zumstein E."/>
            <person name="Yoshikawa H."/>
            <person name="Danchin A."/>
        </authorList>
    </citation>
    <scope>NUCLEOTIDE SEQUENCE [LARGE SCALE GENOMIC DNA]</scope>
    <source>
        <strain>168</strain>
    </source>
</reference>
<accession>O34947</accession>
<accession>Q796E9</accession>
<proteinExistence type="inferred from homology"/>
<name>YOAZ_BACSU</name>
<feature type="chain" id="PRO_0000388350" description="Uncharacterized protease YoaZ">
    <location>
        <begin position="1"/>
        <end position="210"/>
    </location>
</feature>
<feature type="domain" description="PfpI endopeptidase">
    <location>
        <begin position="4"/>
        <end position="180"/>
    </location>
</feature>
<feature type="active site" description="Nucleophile" evidence="1">
    <location>
        <position position="110"/>
    </location>
</feature>
<keyword id="KW-0378">Hydrolase</keyword>
<keyword id="KW-0645">Protease</keyword>
<keyword id="KW-1185">Reference proteome</keyword>